<name>IL19_HUMAN</name>
<feature type="signal peptide" evidence="8">
    <location>
        <begin position="1"/>
        <end position="24"/>
    </location>
</feature>
<feature type="chain" id="PRO_0000015379" description="Interleukin-19">
    <location>
        <begin position="25"/>
        <end position="177"/>
    </location>
</feature>
<feature type="glycosylation site" description="N-linked (GlcNAc...) asparagine" evidence="2">
    <location>
        <position position="56"/>
    </location>
</feature>
<feature type="glycosylation site" description="N-linked (GlcNAc...) asparagine" evidence="2">
    <location>
        <position position="135"/>
    </location>
</feature>
<feature type="disulfide bond" evidence="7">
    <location>
        <begin position="28"/>
        <end position="121"/>
    </location>
</feature>
<feature type="disulfide bond" evidence="7">
    <location>
        <begin position="75"/>
        <end position="127"/>
    </location>
</feature>
<feature type="disulfide bond" evidence="7">
    <location>
        <begin position="76"/>
        <end position="129"/>
    </location>
</feature>
<feature type="splice variant" id="VSP_046253" description="In isoform 2." evidence="13">
    <original>M</original>
    <variation>MCTEGAFPHRSACSLPLTHVHTHIHVCVPVLWGSVPRGM</variation>
    <location>
        <position position="1"/>
    </location>
</feature>
<feature type="splice variant" id="VSP_057193" description="In isoform 3." evidence="14">
    <original>QEQRQCHCRQEATNATRVIHDNYDQLEVHAAAIKSLGELDVFLAWINKNHEVMFSA</original>
    <variation>VSHWVRIPASAPCLPKERPGSAGPHRPPDMVLGVKGNSLRTSTGRTVENLSQWPLLPQGSLPADNSSDGLLLDNPPGVTNLCQHIP</variation>
    <location>
        <begin position="122"/>
        <end position="177"/>
    </location>
</feature>
<feature type="sequence variant" id="VAR_013077" description="In dbSNP:rs2243191." evidence="3 6 11 12">
    <original>F</original>
    <variation>S</variation>
    <location>
        <position position="175"/>
    </location>
</feature>
<feature type="helix" evidence="16">
    <location>
        <begin position="23"/>
        <end position="26"/>
    </location>
</feature>
<feature type="turn" evidence="16">
    <location>
        <begin position="28"/>
        <end position="31"/>
    </location>
</feature>
<feature type="helix" evidence="16">
    <location>
        <begin position="34"/>
        <end position="49"/>
    </location>
</feature>
<feature type="helix" evidence="16">
    <location>
        <begin position="61"/>
        <end position="64"/>
    </location>
</feature>
<feature type="strand" evidence="16">
    <location>
        <begin position="65"/>
        <end position="67"/>
    </location>
</feature>
<feature type="helix" evidence="16">
    <location>
        <begin position="71"/>
        <end position="87"/>
    </location>
</feature>
<feature type="helix" evidence="16">
    <location>
        <begin position="89"/>
        <end position="92"/>
    </location>
</feature>
<feature type="helix" evidence="16">
    <location>
        <begin position="98"/>
        <end position="121"/>
    </location>
</feature>
<feature type="helix" evidence="16">
    <location>
        <begin position="131"/>
        <end position="146"/>
    </location>
</feature>
<feature type="helix" evidence="16">
    <location>
        <begin position="149"/>
        <end position="158"/>
    </location>
</feature>
<feature type="helix" evidence="16">
    <location>
        <begin position="160"/>
        <end position="170"/>
    </location>
</feature>
<proteinExistence type="evidence at protein level"/>
<organism>
    <name type="scientific">Homo sapiens</name>
    <name type="common">Human</name>
    <dbReference type="NCBI Taxonomy" id="9606"/>
    <lineage>
        <taxon>Eukaryota</taxon>
        <taxon>Metazoa</taxon>
        <taxon>Chordata</taxon>
        <taxon>Craniata</taxon>
        <taxon>Vertebrata</taxon>
        <taxon>Euteleostomi</taxon>
        <taxon>Mammalia</taxon>
        <taxon>Eutheria</taxon>
        <taxon>Euarchontoglires</taxon>
        <taxon>Primates</taxon>
        <taxon>Haplorrhini</taxon>
        <taxon>Catarrhini</taxon>
        <taxon>Hominidae</taxon>
        <taxon>Homo</taxon>
    </lineage>
</organism>
<keyword id="KW-0002">3D-structure</keyword>
<keyword id="KW-0025">Alternative splicing</keyword>
<keyword id="KW-0053">Apoptosis</keyword>
<keyword id="KW-0202">Cytokine</keyword>
<keyword id="KW-0903">Direct protein sequencing</keyword>
<keyword id="KW-1015">Disulfide bond</keyword>
<keyword id="KW-0325">Glycoprotein</keyword>
<keyword id="KW-1267">Proteomics identification</keyword>
<keyword id="KW-1185">Reference proteome</keyword>
<keyword id="KW-0964">Secreted</keyword>
<keyword id="KW-0732">Signal</keyword>
<reference key="1">
    <citation type="journal article" date="2000" name="Genes Immun.">
        <title>Cloning, expression and initial characterization of interleukin-19 (IL-19), a novel homolog of human interleukin-10 (IL-10).</title>
        <authorList>
            <person name="Gallagher G."/>
            <person name="Dickensheets H."/>
            <person name="Eskdale J."/>
            <person name="Izotova L.S."/>
            <person name="Mirochnitchenko O.V."/>
            <person name="Peat J.D."/>
            <person name="Vasquez N."/>
            <person name="Pestka S."/>
            <person name="Donnelly R.P."/>
            <person name="Kotenko S.V."/>
        </authorList>
    </citation>
    <scope>NUCLEOTIDE SEQUENCE [GENOMIC DNA / MRNA] (ISOFORMS 1 AND 2)</scope>
    <scope>VARIANT SER-175</scope>
</reference>
<reference key="2">
    <citation type="journal article" date="2002" name="J. Immunol.">
        <title>IL-19 induces production of IL-6 and TNF-alpha and results in cell apoptosis through TNF-alpha.</title>
        <authorList>
            <person name="Liao Y.-C."/>
            <person name="Liang W.G."/>
            <person name="Chen F.W."/>
            <person name="Hsu J.H."/>
            <person name="Yang J.J."/>
            <person name="Chang M.-S."/>
        </authorList>
    </citation>
    <scope>NUCLEOTIDE SEQUENCE [MRNA] (ISOFORM 1)</scope>
    <scope>VARIANT SER-175</scope>
</reference>
<reference key="3">
    <citation type="journal article" date="2009" name="BMC Genomics">
        <title>Discovery of novel human transcript variants by analysis of intronic single-block EST with polyadenylation site.</title>
        <authorList>
            <person name="Wang P."/>
            <person name="Yu P."/>
            <person name="Gao P."/>
            <person name="Shi T."/>
            <person name="Ma D."/>
        </authorList>
    </citation>
    <scope>NUCLEOTIDE SEQUENCE [MRNA] (ISOFORM 3)</scope>
</reference>
<reference key="4">
    <citation type="submission" date="1999-10" db="EMBL/GenBank/DDBJ databases">
        <title>Homo sapiens homolog of melanoma differentiation associated gene.</title>
        <authorList>
            <person name="Conklin D."/>
            <person name="Petersen J."/>
            <person name="Loften-Day C."/>
            <person name="Whitmore T."/>
            <person name="Muerer M."/>
            <person name="Sexson S."/>
            <person name="Smith D."/>
            <person name="Lok S."/>
            <person name="Pownder T."/>
            <person name="O'Hara P."/>
        </authorList>
    </citation>
    <scope>NUCLEOTIDE SEQUENCE [MRNA] (ISOFORM 1)</scope>
    <scope>VARIANT SER-175</scope>
</reference>
<reference key="5">
    <citation type="submission" date="2001-06" db="EMBL/GenBank/DDBJ databases">
        <authorList>
            <consortium name="SeattleSNPs variation discovery resource"/>
        </authorList>
    </citation>
    <scope>NUCLEOTIDE SEQUENCE [GENOMIC DNA]</scope>
    <scope>VARIANT SER-175</scope>
</reference>
<reference key="6">
    <citation type="journal article" date="2006" name="Nature">
        <title>The DNA sequence and biological annotation of human chromosome 1.</title>
        <authorList>
            <person name="Gregory S.G."/>
            <person name="Barlow K.F."/>
            <person name="McLay K.E."/>
            <person name="Kaul R."/>
            <person name="Swarbreck D."/>
            <person name="Dunham A."/>
            <person name="Scott C.E."/>
            <person name="Howe K.L."/>
            <person name="Woodfine K."/>
            <person name="Spencer C.C.A."/>
            <person name="Jones M.C."/>
            <person name="Gillson C."/>
            <person name="Searle S."/>
            <person name="Zhou Y."/>
            <person name="Kokocinski F."/>
            <person name="McDonald L."/>
            <person name="Evans R."/>
            <person name="Phillips K."/>
            <person name="Atkinson A."/>
            <person name="Cooper R."/>
            <person name="Jones C."/>
            <person name="Hall R.E."/>
            <person name="Andrews T.D."/>
            <person name="Lloyd C."/>
            <person name="Ainscough R."/>
            <person name="Almeida J.P."/>
            <person name="Ambrose K.D."/>
            <person name="Anderson F."/>
            <person name="Andrew R.W."/>
            <person name="Ashwell R.I.S."/>
            <person name="Aubin K."/>
            <person name="Babbage A.K."/>
            <person name="Bagguley C.L."/>
            <person name="Bailey J."/>
            <person name="Beasley H."/>
            <person name="Bethel G."/>
            <person name="Bird C.P."/>
            <person name="Bray-Allen S."/>
            <person name="Brown J.Y."/>
            <person name="Brown A.J."/>
            <person name="Buckley D."/>
            <person name="Burton J."/>
            <person name="Bye J."/>
            <person name="Carder C."/>
            <person name="Chapman J.C."/>
            <person name="Clark S.Y."/>
            <person name="Clarke G."/>
            <person name="Clee C."/>
            <person name="Cobley V."/>
            <person name="Collier R.E."/>
            <person name="Corby N."/>
            <person name="Coville G.J."/>
            <person name="Davies J."/>
            <person name="Deadman R."/>
            <person name="Dunn M."/>
            <person name="Earthrowl M."/>
            <person name="Ellington A.G."/>
            <person name="Errington H."/>
            <person name="Frankish A."/>
            <person name="Frankland J."/>
            <person name="French L."/>
            <person name="Garner P."/>
            <person name="Garnett J."/>
            <person name="Gay L."/>
            <person name="Ghori M.R.J."/>
            <person name="Gibson R."/>
            <person name="Gilby L.M."/>
            <person name="Gillett W."/>
            <person name="Glithero R.J."/>
            <person name="Grafham D.V."/>
            <person name="Griffiths C."/>
            <person name="Griffiths-Jones S."/>
            <person name="Grocock R."/>
            <person name="Hammond S."/>
            <person name="Harrison E.S.I."/>
            <person name="Hart E."/>
            <person name="Haugen E."/>
            <person name="Heath P.D."/>
            <person name="Holmes S."/>
            <person name="Holt K."/>
            <person name="Howden P.J."/>
            <person name="Hunt A.R."/>
            <person name="Hunt S.E."/>
            <person name="Hunter G."/>
            <person name="Isherwood J."/>
            <person name="James R."/>
            <person name="Johnson C."/>
            <person name="Johnson D."/>
            <person name="Joy A."/>
            <person name="Kay M."/>
            <person name="Kershaw J.K."/>
            <person name="Kibukawa M."/>
            <person name="Kimberley A.M."/>
            <person name="King A."/>
            <person name="Knights A.J."/>
            <person name="Lad H."/>
            <person name="Laird G."/>
            <person name="Lawlor S."/>
            <person name="Leongamornlert D.A."/>
            <person name="Lloyd D.M."/>
            <person name="Loveland J."/>
            <person name="Lovell J."/>
            <person name="Lush M.J."/>
            <person name="Lyne R."/>
            <person name="Martin S."/>
            <person name="Mashreghi-Mohammadi M."/>
            <person name="Matthews L."/>
            <person name="Matthews N.S.W."/>
            <person name="McLaren S."/>
            <person name="Milne S."/>
            <person name="Mistry S."/>
            <person name="Moore M.J.F."/>
            <person name="Nickerson T."/>
            <person name="O'Dell C.N."/>
            <person name="Oliver K."/>
            <person name="Palmeiri A."/>
            <person name="Palmer S.A."/>
            <person name="Parker A."/>
            <person name="Patel D."/>
            <person name="Pearce A.V."/>
            <person name="Peck A.I."/>
            <person name="Pelan S."/>
            <person name="Phelps K."/>
            <person name="Phillimore B.J."/>
            <person name="Plumb R."/>
            <person name="Rajan J."/>
            <person name="Raymond C."/>
            <person name="Rouse G."/>
            <person name="Saenphimmachak C."/>
            <person name="Sehra H.K."/>
            <person name="Sheridan E."/>
            <person name="Shownkeen R."/>
            <person name="Sims S."/>
            <person name="Skuce C.D."/>
            <person name="Smith M."/>
            <person name="Steward C."/>
            <person name="Subramanian S."/>
            <person name="Sycamore N."/>
            <person name="Tracey A."/>
            <person name="Tromans A."/>
            <person name="Van Helmond Z."/>
            <person name="Wall M."/>
            <person name="Wallis J.M."/>
            <person name="White S."/>
            <person name="Whitehead S.L."/>
            <person name="Wilkinson J.E."/>
            <person name="Willey D.L."/>
            <person name="Williams H."/>
            <person name="Wilming L."/>
            <person name="Wray P.W."/>
            <person name="Wu Z."/>
            <person name="Coulson A."/>
            <person name="Vaudin M."/>
            <person name="Sulston J.E."/>
            <person name="Durbin R.M."/>
            <person name="Hubbard T."/>
            <person name="Wooster R."/>
            <person name="Dunham I."/>
            <person name="Carter N.P."/>
            <person name="McVean G."/>
            <person name="Ross M.T."/>
            <person name="Harrow J."/>
            <person name="Olson M.V."/>
            <person name="Beck S."/>
            <person name="Rogers J."/>
            <person name="Bentley D.R."/>
        </authorList>
    </citation>
    <scope>NUCLEOTIDE SEQUENCE [LARGE SCALE GENOMIC DNA]</scope>
</reference>
<reference key="7">
    <citation type="journal article" date="2001" name="J. Immunol.">
        <title>STAT activation by IL-19, IL-20 and mda-7 through IL-20 receptor complexes of two types.</title>
        <authorList>
            <person name="Dumoutier L."/>
            <person name="Leemans C."/>
            <person name="Lejeune D."/>
            <person name="Kotenko S.V."/>
            <person name="Renauld J.-C."/>
        </authorList>
    </citation>
    <scope>FUNCTION</scope>
</reference>
<reference key="8">
    <citation type="journal article" date="2002" name="J. Biol. Chem.">
        <title>Interleukins 19, 20, and 24 signal through two distinct receptor complexes. Differences in receptor-ligand interactions mediate unique biological functions.</title>
        <authorList>
            <person name="Parrish-Novak J."/>
            <person name="Xu W."/>
            <person name="Brender T."/>
            <person name="Yao L."/>
            <person name="Jones C."/>
            <person name="West J."/>
            <person name="Brandt C."/>
            <person name="Jelinek L."/>
            <person name="Madden K."/>
            <person name="McKernan P.A."/>
            <person name="Foster D.C."/>
            <person name="Jaspers S."/>
            <person name="Chandrasekher Y.A."/>
        </authorList>
    </citation>
    <scope>FUNCTION</scope>
</reference>
<reference key="9">
    <citation type="journal article" date="2004" name="Protein Sci.">
        <title>Signal peptide prediction based on analysis of experimentally verified cleavage sites.</title>
        <authorList>
            <person name="Zhang Z."/>
            <person name="Henzel W.J."/>
        </authorList>
    </citation>
    <scope>PROTEIN SEQUENCE OF 25-39</scope>
</reference>
<reference key="10">
    <citation type="journal article" date="2006" name="Eur. J. Immunol.">
        <title>Regulation of T cells and cytokines by the interleukin-10 (IL-10)-family cytokines IL-19, IL-20, IL-22, IL-24 and IL-26.</title>
        <authorList>
            <person name="Oral H.B."/>
            <person name="Kotenko S.V."/>
            <person name="Yilmaz M."/>
            <person name="Mani O."/>
            <person name="Zumkehr J."/>
            <person name="Blaser K."/>
            <person name="Akdis C.A."/>
            <person name="Akdis M."/>
        </authorList>
    </citation>
    <scope>FUNCTION</scope>
</reference>
<reference key="11">
    <citation type="journal article" date="2021" name="Sci. Signal.">
        <title>Induction of IL19 expression through JNK and cGAS-STING modulates DNA damage-induced cytokine production.</title>
        <authorList>
            <person name="Small S.H."/>
            <person name="Tang E.J."/>
            <person name="Ragland R.L."/>
            <person name="Ruzankina Y."/>
            <person name="Schoppy D.W."/>
            <person name="Mandal R.S."/>
            <person name="Glineburg M.R."/>
            <person name="Ustelenca Z."/>
            <person name="Powell D.J."/>
            <person name="Simpkins F."/>
            <person name="Johnson F.B."/>
            <person name="Brown E.J."/>
        </authorList>
    </citation>
    <scope>FUNCTION</scope>
    <scope>INDUCTION BY DNA DAMAGE</scope>
</reference>
<reference key="12">
    <citation type="journal article" date="2003" name="J. Biol. Chem.">
        <title>Crystal structure of interleukin-19 defines a new subfamily of helical cytokines.</title>
        <authorList>
            <person name="Chang C."/>
            <person name="Magracheva E."/>
            <person name="Kozlov S."/>
            <person name="Fong S."/>
            <person name="Tobin G."/>
            <person name="Kotenko S."/>
            <person name="Wlodawer A."/>
            <person name="Zdanov A."/>
        </authorList>
    </citation>
    <scope>X-RAY CRYSTALLOGRAPHY (1.95 ANGSTROMS) OF 19-177</scope>
    <scope>DISULFIDE BONDS</scope>
</reference>
<dbReference type="EMBL" id="AF276915">
    <property type="protein sequence ID" value="AAG16755.1"/>
    <property type="molecule type" value="Genomic_DNA"/>
</dbReference>
<dbReference type="EMBL" id="AY040367">
    <property type="protein sequence ID" value="AAK91776.1"/>
    <property type="molecule type" value="mRNA"/>
</dbReference>
<dbReference type="EMBL" id="AF453946">
    <property type="protein sequence ID" value="AAN40906.1"/>
    <property type="molecule type" value="mRNA"/>
</dbReference>
<dbReference type="EMBL" id="FJ380053">
    <property type="protein sequence ID" value="ACJ06540.1"/>
    <property type="molecule type" value="mRNA"/>
</dbReference>
<dbReference type="EMBL" id="AF192498">
    <property type="protein sequence ID" value="AAF06663.1"/>
    <property type="molecule type" value="mRNA"/>
</dbReference>
<dbReference type="EMBL" id="AF390905">
    <property type="protein sequence ID" value="AAK64498.1"/>
    <property type="molecule type" value="Genomic_DNA"/>
</dbReference>
<dbReference type="EMBL" id="AL513315">
    <property type="status" value="NOT_ANNOTATED_CDS"/>
    <property type="molecule type" value="Genomic_DNA"/>
</dbReference>
<dbReference type="EMBL" id="AL049615">
    <property type="protein sequence ID" value="CAB72342.1"/>
    <property type="molecule type" value="Genomic_DNA"/>
</dbReference>
<dbReference type="CCDS" id="CCDS1469.1">
    <molecule id="Q9UHD0-1"/>
</dbReference>
<dbReference type="RefSeq" id="NP_001356534.1">
    <molecule id="Q9UHD0-1"/>
    <property type="nucleotide sequence ID" value="NM_001369605.1"/>
</dbReference>
<dbReference type="RefSeq" id="NP_001380419.1">
    <molecule id="Q9UHD0-1"/>
    <property type="nucleotide sequence ID" value="NM_001393490.1"/>
</dbReference>
<dbReference type="RefSeq" id="NP_001380420.1">
    <molecule id="Q9UHD0-1"/>
    <property type="nucleotide sequence ID" value="NM_001393491.1"/>
</dbReference>
<dbReference type="RefSeq" id="NP_037503.2">
    <molecule id="Q9UHD0-1"/>
    <property type="nucleotide sequence ID" value="NM_013371.3"/>
</dbReference>
<dbReference type="RefSeq" id="NP_715639.2">
    <molecule id="Q9UHD0-1"/>
    <property type="nucleotide sequence ID" value="NM_153758.5"/>
</dbReference>
<dbReference type="RefSeq" id="XP_011507752.1">
    <molecule id="Q9UHD0-3"/>
    <property type="nucleotide sequence ID" value="XM_011509450.3"/>
</dbReference>
<dbReference type="RefSeq" id="XP_054192173.1">
    <molecule id="Q9UHD0-3"/>
    <property type="nucleotide sequence ID" value="XM_054336198.1"/>
</dbReference>
<dbReference type="PDB" id="1N1F">
    <property type="method" value="X-ray"/>
    <property type="resolution" value="1.95 A"/>
    <property type="chains" value="A=19-177"/>
</dbReference>
<dbReference type="PDBsum" id="1N1F"/>
<dbReference type="SMR" id="Q9UHD0"/>
<dbReference type="BioGRID" id="118986">
    <property type="interactions" value="4"/>
</dbReference>
<dbReference type="ComplexPortal" id="CPX-10221">
    <property type="entry name" value="Interleukin-19 receptor-ligand complex"/>
</dbReference>
<dbReference type="CORUM" id="Q9UHD0"/>
<dbReference type="FunCoup" id="Q9UHD0">
    <property type="interactions" value="591"/>
</dbReference>
<dbReference type="IntAct" id="Q9UHD0">
    <property type="interactions" value="3"/>
</dbReference>
<dbReference type="STRING" id="9606.ENSP00000499459"/>
<dbReference type="GlyCosmos" id="Q9UHD0">
    <property type="glycosylation" value="2 sites, No reported glycans"/>
</dbReference>
<dbReference type="GlyGen" id="Q9UHD0">
    <property type="glycosylation" value="2 sites"/>
</dbReference>
<dbReference type="BioMuta" id="IL19"/>
<dbReference type="DMDM" id="146345440"/>
<dbReference type="MassIVE" id="Q9UHD0"/>
<dbReference type="PaxDb" id="9606-ENSP00000343000"/>
<dbReference type="PeptideAtlas" id="Q9UHD0"/>
<dbReference type="ProteomicsDB" id="84320">
    <molecule id="Q9UHD0-1"/>
</dbReference>
<dbReference type="Antibodypedia" id="34588">
    <property type="antibodies" value="409 antibodies from 31 providers"/>
</dbReference>
<dbReference type="DNASU" id="29949"/>
<dbReference type="Ensembl" id="ENST00000270218.10">
    <molecule id="Q9UHD0-1"/>
    <property type="protein sequence ID" value="ENSP00000270218.6"/>
    <property type="gene ID" value="ENSG00000142224.18"/>
</dbReference>
<dbReference type="Ensembl" id="ENST00000340758.7">
    <molecule id="Q9UHD0-1"/>
    <property type="protein sequence ID" value="ENSP00000343000.3"/>
    <property type="gene ID" value="ENSG00000142224.18"/>
</dbReference>
<dbReference type="Ensembl" id="ENST00000656872.2">
    <molecule id="Q9UHD0-1"/>
    <property type="protein sequence ID" value="ENSP00000499487.2"/>
    <property type="gene ID" value="ENSG00000142224.18"/>
</dbReference>
<dbReference type="Ensembl" id="ENST00000659997.3">
    <molecule id="Q9UHD0-1"/>
    <property type="protein sequence ID" value="ENSP00000499459.2"/>
    <property type="gene ID" value="ENSG00000142224.18"/>
</dbReference>
<dbReference type="GeneID" id="29949"/>
<dbReference type="KEGG" id="hsa:29949"/>
<dbReference type="MANE-Select" id="ENST00000659997.3">
    <property type="protein sequence ID" value="ENSP00000499459.2"/>
    <property type="RefSeq nucleotide sequence ID" value="NM_153758.5"/>
    <property type="RefSeq protein sequence ID" value="NP_715639.2"/>
</dbReference>
<dbReference type="UCSC" id="uc001heo.3">
    <molecule id="Q9UHD0-1"/>
    <property type="organism name" value="human"/>
</dbReference>
<dbReference type="AGR" id="HGNC:5990"/>
<dbReference type="CTD" id="29949"/>
<dbReference type="DisGeNET" id="29949"/>
<dbReference type="GeneCards" id="IL19"/>
<dbReference type="HGNC" id="HGNC:5990">
    <property type="gene designation" value="IL19"/>
</dbReference>
<dbReference type="HPA" id="ENSG00000142224">
    <property type="expression patterns" value="Group enriched (cervix, salivary gland)"/>
</dbReference>
<dbReference type="MIM" id="605687">
    <property type="type" value="gene"/>
</dbReference>
<dbReference type="neXtProt" id="NX_Q9UHD0"/>
<dbReference type="OpenTargets" id="ENSG00000142224"/>
<dbReference type="PharmGKB" id="PA29806"/>
<dbReference type="VEuPathDB" id="HostDB:ENSG00000142224"/>
<dbReference type="eggNOG" id="ENOG502SRCR">
    <property type="taxonomic scope" value="Eukaryota"/>
</dbReference>
<dbReference type="GeneTree" id="ENSGT00950000183124"/>
<dbReference type="HOGENOM" id="CLU_098690_0_0_1"/>
<dbReference type="InParanoid" id="Q9UHD0"/>
<dbReference type="OMA" id="FLYMQKA"/>
<dbReference type="OrthoDB" id="9938154at2759"/>
<dbReference type="PAN-GO" id="Q9UHD0">
    <property type="GO annotations" value="0 GO annotations based on evolutionary models"/>
</dbReference>
<dbReference type="PhylomeDB" id="Q9UHD0"/>
<dbReference type="TreeFam" id="TF333253"/>
<dbReference type="PathwayCommons" id="Q9UHD0"/>
<dbReference type="Reactome" id="R-HSA-8854691">
    <property type="pathway name" value="Interleukin-20 family signaling"/>
</dbReference>
<dbReference type="SignaLink" id="Q9UHD0"/>
<dbReference type="SIGNOR" id="Q9UHD0"/>
<dbReference type="BioGRID-ORCS" id="29949">
    <property type="hits" value="9 hits in 1147 CRISPR screens"/>
</dbReference>
<dbReference type="ChiTaRS" id="IL19">
    <property type="organism name" value="human"/>
</dbReference>
<dbReference type="EvolutionaryTrace" id="Q9UHD0"/>
<dbReference type="GenomeRNAi" id="29949"/>
<dbReference type="Pharos" id="Q9UHD0">
    <property type="development level" value="Tbio"/>
</dbReference>
<dbReference type="PRO" id="PR:Q9UHD0"/>
<dbReference type="Proteomes" id="UP000005640">
    <property type="component" value="Chromosome 1"/>
</dbReference>
<dbReference type="RNAct" id="Q9UHD0">
    <property type="molecule type" value="protein"/>
</dbReference>
<dbReference type="Bgee" id="ENSG00000142224">
    <property type="expression patterns" value="Expressed in nasal cavity epithelium and 78 other cell types or tissues"/>
</dbReference>
<dbReference type="GO" id="GO:0005576">
    <property type="term" value="C:extracellular region"/>
    <property type="evidence" value="ECO:0000304"/>
    <property type="project" value="Reactome"/>
</dbReference>
<dbReference type="GO" id="GO:0005615">
    <property type="term" value="C:extracellular space"/>
    <property type="evidence" value="ECO:0000318"/>
    <property type="project" value="GO_Central"/>
</dbReference>
<dbReference type="GO" id="GO:0005125">
    <property type="term" value="F:cytokine activity"/>
    <property type="evidence" value="ECO:0000318"/>
    <property type="project" value="GO_Central"/>
</dbReference>
<dbReference type="GO" id="GO:0006915">
    <property type="term" value="P:apoptotic process"/>
    <property type="evidence" value="ECO:0007669"/>
    <property type="project" value="UniProtKB-KW"/>
</dbReference>
<dbReference type="GO" id="GO:0006955">
    <property type="term" value="P:immune response"/>
    <property type="evidence" value="ECO:0000318"/>
    <property type="project" value="GO_Central"/>
</dbReference>
<dbReference type="GO" id="GO:2001237">
    <property type="term" value="P:negative regulation of extrinsic apoptotic signaling pathway"/>
    <property type="evidence" value="ECO:0007669"/>
    <property type="project" value="Ensembl"/>
</dbReference>
<dbReference type="GO" id="GO:0010989">
    <property type="term" value="P:negative regulation of low-density lipoprotein particle clearance"/>
    <property type="evidence" value="ECO:0007669"/>
    <property type="project" value="Ensembl"/>
</dbReference>
<dbReference type="GO" id="GO:2001244">
    <property type="term" value="P:positive regulation of intrinsic apoptotic signaling pathway"/>
    <property type="evidence" value="ECO:0007669"/>
    <property type="project" value="Ensembl"/>
</dbReference>
<dbReference type="GO" id="GO:0072593">
    <property type="term" value="P:reactive oxygen species metabolic process"/>
    <property type="evidence" value="ECO:0007669"/>
    <property type="project" value="Ensembl"/>
</dbReference>
<dbReference type="GO" id="GO:0007165">
    <property type="term" value="P:signal transduction"/>
    <property type="evidence" value="ECO:0000303"/>
    <property type="project" value="UniProtKB"/>
</dbReference>
<dbReference type="FunFam" id="1.20.1250.10:FF:000019">
    <property type="entry name" value="Interleukin 20"/>
    <property type="match status" value="1"/>
</dbReference>
<dbReference type="Gene3D" id="1.20.1250.10">
    <property type="match status" value="1"/>
</dbReference>
<dbReference type="InterPro" id="IPR009079">
    <property type="entry name" value="4_helix_cytokine-like_core"/>
</dbReference>
<dbReference type="InterPro" id="IPR020443">
    <property type="entry name" value="IL-10/19/20/24/26"/>
</dbReference>
<dbReference type="InterPro" id="IPR020423">
    <property type="entry name" value="IL-10_CS"/>
</dbReference>
<dbReference type="InterPro" id="IPR020421">
    <property type="entry name" value="IL-19"/>
</dbReference>
<dbReference type="PANTHER" id="PTHR48482:SF3">
    <property type="entry name" value="INTERLEUKIN-19"/>
    <property type="match status" value="1"/>
</dbReference>
<dbReference type="PANTHER" id="PTHR48482">
    <property type="entry name" value="INTERLEUKIN-19-RELATED"/>
    <property type="match status" value="1"/>
</dbReference>
<dbReference type="Pfam" id="PF00726">
    <property type="entry name" value="IL10"/>
    <property type="match status" value="1"/>
</dbReference>
<dbReference type="PRINTS" id="PR01934">
    <property type="entry name" value="INTRLEUKIN19"/>
</dbReference>
<dbReference type="SUPFAM" id="SSF47266">
    <property type="entry name" value="4-helical cytokines"/>
    <property type="match status" value="1"/>
</dbReference>
<dbReference type="PROSITE" id="PS00520">
    <property type="entry name" value="INTERLEUKIN_10"/>
    <property type="match status" value="1"/>
</dbReference>
<gene>
    <name type="primary">IL19</name>
    <name type="synonym">ZMDA1</name>
</gene>
<sequence length="177" mass="20452">MKLQCVSLWLLGTILILCSVDNHGLRRCLISTDMHHIEESFQEIKRAIQAKDTFPNVTILSTLETLQIIKPLDVCCVTKNLLAFYVDRVFKDHQEPNPKILRKISSIANSFLYMQKTLRQCQEQRQCHCRQEATNATRVIHDNYDQLEVHAAAIKSLGELDVFLAWINKNHEVMFSA</sequence>
<evidence type="ECO:0000250" key="1">
    <source>
        <dbReference type="UniProtKB" id="Q8CJ70"/>
    </source>
</evidence>
<evidence type="ECO:0000255" key="2"/>
<evidence type="ECO:0000269" key="3">
    <source>
    </source>
</evidence>
<evidence type="ECO:0000269" key="4">
    <source>
    </source>
</evidence>
<evidence type="ECO:0000269" key="5">
    <source>
    </source>
</evidence>
<evidence type="ECO:0000269" key="6">
    <source>
    </source>
</evidence>
<evidence type="ECO:0000269" key="7">
    <source>
    </source>
</evidence>
<evidence type="ECO:0000269" key="8">
    <source>
    </source>
</evidence>
<evidence type="ECO:0000269" key="9">
    <source>
    </source>
</evidence>
<evidence type="ECO:0000269" key="10">
    <source>
    </source>
</evidence>
<evidence type="ECO:0000269" key="11">
    <source ref="4"/>
</evidence>
<evidence type="ECO:0000269" key="12">
    <source ref="5"/>
</evidence>
<evidence type="ECO:0000303" key="13">
    <source>
    </source>
</evidence>
<evidence type="ECO:0000303" key="14">
    <source>
    </source>
</evidence>
<evidence type="ECO:0000305" key="15"/>
<evidence type="ECO:0007829" key="16">
    <source>
        <dbReference type="PDB" id="1N1F"/>
    </source>
</evidence>
<comment type="function">
    <text evidence="1 4 5 9 10">Cytokine that functions as an anti-inflammatory and proangiogenic factor (PubMed:34932373). Polarizes adaptive immunity to an anti-inflammatory phenotype through induction of T-helper 2 responses by both down-regulation of IFN-gamma and up-regulation of IL4 and IL13 (PubMed:16365913). Produced by osteocytes, stimulates granulopoiesis and neutrophil formation (By similarity). Exerts its biological effect through a receptor complex consisting of a heterodimer of IL20RA and IL20RB (PubMed:12351624). In turn, activates the Janus kinase (JAK) and signal transducer and activator of transcription (STAT) pathway, and importantly, STAT3 (PubMed:11564763).</text>
</comment>
<comment type="interaction">
    <interactant intactId="EBI-14023330">
        <id>PRO_0000015379</id>
    </interactant>
    <interactant intactId="EBI-14022792">
        <id>Q6UXL0</id>
        <label>IL20RB</label>
    </interactant>
    <organismsDiffer>false</organismsDiffer>
    <experiments>4</experiments>
</comment>
<comment type="subcellular location">
    <subcellularLocation>
        <location>Secreted</location>
    </subcellularLocation>
</comment>
<comment type="alternative products">
    <event type="alternative splicing"/>
    <isoform>
        <id>Q9UHD0-1</id>
        <name>1</name>
        <sequence type="displayed"/>
    </isoform>
    <isoform>
        <id>Q9UHD0-2</id>
        <name>2</name>
        <sequence type="described" ref="VSP_046253"/>
    </isoform>
    <isoform>
        <id>Q9UHD0-3</id>
        <name>3</name>
        <sequence type="described" ref="VSP_057193"/>
    </isoform>
</comment>
<comment type="induction">
    <text evidence="10">by DNA damage through pathways mediated by JUN and cGAS-STING leading to production of the cytokines IL1, IL6, and IL8.</text>
</comment>
<comment type="similarity">
    <text evidence="15">Belongs to the IL-10 family.</text>
</comment>
<protein>
    <recommendedName>
        <fullName>Interleukin-19</fullName>
        <shortName>IL-19</shortName>
    </recommendedName>
    <alternativeName>
        <fullName>Melanoma differentiation-associated protein-like protein</fullName>
    </alternativeName>
    <alternativeName>
        <fullName>NG.1</fullName>
    </alternativeName>
</protein>
<accession>Q9UHD0</accession>
<accession>B6VEV9</accession>
<accession>Q5VUT3</accession>
<accession>Q96QR4</accession>
<accession>Q9NUA0</accession>